<keyword id="KW-0150">Chloroplast</keyword>
<keyword id="KW-0903">Direct protein sequencing</keyword>
<keyword id="KW-0413">Isomerase</keyword>
<keyword id="KW-0934">Plastid</keyword>
<keyword id="KW-1185">Reference proteome</keyword>
<keyword id="KW-0697">Rotamase</keyword>
<keyword id="KW-0793">Thylakoid</keyword>
<evidence type="ECO:0000255" key="1">
    <source>
        <dbReference type="PROSITE-ProRule" id="PRU00156"/>
    </source>
</evidence>
<evidence type="ECO:0000269" key="2">
    <source>
    </source>
</evidence>
<evidence type="ECO:0000269" key="3">
    <source>
    </source>
</evidence>
<evidence type="ECO:0000305" key="4"/>
<evidence type="ECO:0000305" key="5">
    <source>
    </source>
</evidence>
<sequence length="45" mass="4881">SAEETPLQSKVTNKVYFDISIGNPVGKVVIGLFGDDVPQTAENFR</sequence>
<accession>P82536</accession>
<feature type="chain" id="PRO_0000064216" description="Peptidyl-prolyl cis-trans isomerase TLP20, chloroplastic">
    <location>
        <begin position="1"/>
        <end position="45" status="greater than"/>
    </location>
</feature>
<feature type="domain" description="PPIase cyclophilin-type" evidence="1">
    <location>
        <begin position="11"/>
        <end position="45" status="greater than"/>
    </location>
</feature>
<feature type="non-consecutive residues" evidence="4">
    <location>
        <begin position="27"/>
        <end position="28"/>
    </location>
</feature>
<feature type="non-terminal residue">
    <location>
        <position position="45"/>
    </location>
</feature>
<dbReference type="EC" id="5.2.1.8"/>
<dbReference type="SMR" id="P82536"/>
<dbReference type="IntAct" id="P82536">
    <property type="interactions" value="1"/>
</dbReference>
<dbReference type="BRENDA" id="5.2.1.8">
    <property type="organism ID" value="5812"/>
</dbReference>
<dbReference type="Proteomes" id="UP001155700">
    <property type="component" value="Unplaced"/>
</dbReference>
<dbReference type="GO" id="GO:0009543">
    <property type="term" value="C:chloroplast thylakoid lumen"/>
    <property type="evidence" value="ECO:0007669"/>
    <property type="project" value="UniProtKB-SubCell"/>
</dbReference>
<dbReference type="GO" id="GO:0003755">
    <property type="term" value="F:peptidyl-prolyl cis-trans isomerase activity"/>
    <property type="evidence" value="ECO:0007669"/>
    <property type="project" value="UniProtKB-KW"/>
</dbReference>
<dbReference type="Gene3D" id="2.40.100.10">
    <property type="entry name" value="Cyclophilin-like"/>
    <property type="match status" value="1"/>
</dbReference>
<dbReference type="InterPro" id="IPR029000">
    <property type="entry name" value="Cyclophilin-like_dom_sf"/>
</dbReference>
<dbReference type="SUPFAM" id="SSF50891">
    <property type="entry name" value="Cyclophilin-like"/>
    <property type="match status" value="1"/>
</dbReference>
<protein>
    <recommendedName>
        <fullName>Peptidyl-prolyl cis-trans isomerase TLP20, chloroplastic</fullName>
        <shortName>PPIase</shortName>
        <ecNumber>5.2.1.8</ecNumber>
    </recommendedName>
    <alternativeName>
        <fullName>P18</fullName>
    </alternativeName>
    <alternativeName>
        <fullName>Rotamase</fullName>
    </alternativeName>
    <alternativeName>
        <fullName>Thylakoid lumen PPIase of 20 kDa</fullName>
    </alternativeName>
    <alternativeName>
        <fullName>Thylakoid lumenal 18 kDa protein</fullName>
    </alternativeName>
</protein>
<reference key="1">
    <citation type="journal article" date="2002" name="J. Biol. Chem.">
        <title>Proteome map of the chloroplast lumen of Arabidopsis thaliana.</title>
        <authorList>
            <person name="Schubert M."/>
            <person name="Petersson U.A."/>
            <person name="Haas B.J."/>
            <person name="Funk C."/>
            <person name="Schroeder W.P."/>
            <person name="Kieselbach T."/>
        </authorList>
    </citation>
    <scope>PROTEIN SEQUENCE OF 1-20</scope>
    <scope>SUBCELLULAR LOCATION</scope>
</reference>
<reference key="2">
    <citation type="submission" date="2003-06" db="UniProtKB">
        <authorList>
            <person name="Schubert M."/>
            <person name="Petersson U.A."/>
            <person name="Haas B.J."/>
            <person name="Funk C."/>
            <person name="Schroeder W.P."/>
            <person name="Kieselbach T."/>
        </authorList>
    </citation>
    <scope>SEQUENCE REVISION TO 16</scope>
</reference>
<reference key="3">
    <citation type="journal article" date="2003" name="FEBS Lett.">
        <title>The major peptidyl-prolyl isomerase activity in thylakoid lumen of plant chloroplasts belongs to a novel cyclophilin TLP20.</title>
        <authorList>
            <person name="Edvardsson A."/>
            <person name="Eshaghi S."/>
            <person name="Vener A.V."/>
            <person name="Andersson B."/>
        </authorList>
    </citation>
    <scope>PROTEIN SEQUENCE OF 1-10 AND 15-45</scope>
    <scope>FUNCTION</scope>
    <scope>REGULATION</scope>
</reference>
<organism>
    <name type="scientific">Spinacia oleracea</name>
    <name type="common">Spinach</name>
    <dbReference type="NCBI Taxonomy" id="3562"/>
    <lineage>
        <taxon>Eukaryota</taxon>
        <taxon>Viridiplantae</taxon>
        <taxon>Streptophyta</taxon>
        <taxon>Embryophyta</taxon>
        <taxon>Tracheophyta</taxon>
        <taxon>Spermatophyta</taxon>
        <taxon>Magnoliopsida</taxon>
        <taxon>eudicotyledons</taxon>
        <taxon>Gunneridae</taxon>
        <taxon>Pentapetalae</taxon>
        <taxon>Caryophyllales</taxon>
        <taxon>Chenopodiaceae</taxon>
        <taxon>Chenopodioideae</taxon>
        <taxon>Anserineae</taxon>
        <taxon>Spinacia</taxon>
    </lineage>
</organism>
<comment type="function">
    <text evidence="3">PPIases accelerate the folding of proteins. It catalyzes the cis-trans isomerization of proline imidic peptide bonds in oligopeptides.</text>
</comment>
<comment type="catalytic activity">
    <reaction>
        <text>[protein]-peptidylproline (omega=180) = [protein]-peptidylproline (omega=0)</text>
        <dbReference type="Rhea" id="RHEA:16237"/>
        <dbReference type="Rhea" id="RHEA-COMP:10747"/>
        <dbReference type="Rhea" id="RHEA-COMP:10748"/>
        <dbReference type="ChEBI" id="CHEBI:83833"/>
        <dbReference type="ChEBI" id="CHEBI:83834"/>
        <dbReference type="EC" id="5.2.1.8"/>
    </reaction>
</comment>
<comment type="subcellular location">
    <subcellularLocation>
        <location evidence="2">Plastid</location>
        <location evidence="2">Chloroplast thylakoid lumen</location>
    </subcellularLocation>
</comment>
<comment type="miscellaneous">
    <text evidence="5">Was originally reported as TL18.</text>
</comment>
<comment type="similarity">
    <text evidence="4">Belongs to the cyclophilin-type PPIase family.</text>
</comment>
<proteinExistence type="evidence at protein level"/>
<name>TLP20_SPIOL</name>